<protein>
    <recommendedName>
        <fullName evidence="1">Deoxyguanosinetriphosphate triphosphohydrolase-like protein</fullName>
    </recommendedName>
</protein>
<keyword id="KW-0378">Hydrolase</keyword>
<keyword id="KW-1185">Reference proteome</keyword>
<reference key="1">
    <citation type="journal article" date="2009" name="BMC Microbiol.">
        <title>The genome sequence of Geobacter metallireducens: features of metabolism, physiology and regulation common and dissimilar to Geobacter sulfurreducens.</title>
        <authorList>
            <person name="Aklujkar M."/>
            <person name="Krushkal J."/>
            <person name="DiBartolo G."/>
            <person name="Lapidus A."/>
            <person name="Land M.L."/>
            <person name="Lovley D.R."/>
        </authorList>
    </citation>
    <scope>NUCLEOTIDE SEQUENCE [LARGE SCALE GENOMIC DNA]</scope>
    <source>
        <strain>ATCC 53774 / DSM 7210 / GS-15</strain>
    </source>
</reference>
<accession>Q39UT1</accession>
<gene>
    <name type="ordered locus">Gmet_1762</name>
</gene>
<evidence type="ECO:0000255" key="1">
    <source>
        <dbReference type="HAMAP-Rule" id="MF_01212"/>
    </source>
</evidence>
<evidence type="ECO:0000255" key="2">
    <source>
        <dbReference type="PROSITE-ProRule" id="PRU01175"/>
    </source>
</evidence>
<evidence type="ECO:0000256" key="3">
    <source>
        <dbReference type="SAM" id="MobiDB-lite"/>
    </source>
</evidence>
<comment type="similarity">
    <text evidence="1">Belongs to the dGTPase family. Type 2 subfamily.</text>
</comment>
<proteinExistence type="inferred from homology"/>
<organism>
    <name type="scientific">Geobacter metallireducens (strain ATCC 53774 / DSM 7210 / GS-15)</name>
    <dbReference type="NCBI Taxonomy" id="269799"/>
    <lineage>
        <taxon>Bacteria</taxon>
        <taxon>Pseudomonadati</taxon>
        <taxon>Thermodesulfobacteriota</taxon>
        <taxon>Desulfuromonadia</taxon>
        <taxon>Geobacterales</taxon>
        <taxon>Geobacteraceae</taxon>
        <taxon>Geobacter</taxon>
    </lineage>
</organism>
<name>DGTL1_GEOMG</name>
<feature type="chain" id="PRO_1000138919" description="Deoxyguanosinetriphosphate triphosphohydrolase-like protein">
    <location>
        <begin position="1"/>
        <end position="385"/>
    </location>
</feature>
<feature type="domain" description="HD" evidence="2">
    <location>
        <begin position="75"/>
        <end position="204"/>
    </location>
</feature>
<feature type="region of interest" description="Disordered" evidence="3">
    <location>
        <begin position="1"/>
        <end position="23"/>
    </location>
</feature>
<feature type="compositionally biased region" description="Basic and acidic residues" evidence="3">
    <location>
        <begin position="1"/>
        <end position="14"/>
    </location>
</feature>
<sequence>MTEGVEGRSQERSDLAGFAARSAESRGRKYQEAFRDHRPAFERDRDRIIHCAAFRRLEYKTQVFVNHEGDYYRTRLTHSLEVAQIGKAIARRLGVNEELTEALALAHDLGHTPFGHTGEEVLNRLMEGFGGFEHNLQSFRVVDQLEERYPGFNGLNLSWEVLEGIVKHSSPYDRPVGVIDRFLPGVVPTIEAQIINYADEIAYNNHDIDDGLKSGFITLDQLDGVELWREVHEGIARAYPDIDPERRKLQTISALIGVFIKDLTTTSLENVQRLRITSLDDLRRINRPVVAFSPATAEKNRKLKGFLFENLYRHYRVERMRVKAERYLRQLFESYVKHPTLLPRKYQKKMEILGRERVVCDYIAGMTDRFALDEFKRLFEPYERV</sequence>
<dbReference type="EMBL" id="CP000148">
    <property type="protein sequence ID" value="ABB31993.1"/>
    <property type="molecule type" value="Genomic_DNA"/>
</dbReference>
<dbReference type="RefSeq" id="WP_004513342.1">
    <property type="nucleotide sequence ID" value="NC_007517.1"/>
</dbReference>
<dbReference type="SMR" id="Q39UT1"/>
<dbReference type="STRING" id="269799.Gmet_1762"/>
<dbReference type="KEGG" id="gme:Gmet_1762"/>
<dbReference type="eggNOG" id="COG0232">
    <property type="taxonomic scope" value="Bacteria"/>
</dbReference>
<dbReference type="HOGENOM" id="CLU_028163_1_0_7"/>
<dbReference type="Proteomes" id="UP000007073">
    <property type="component" value="Chromosome"/>
</dbReference>
<dbReference type="GO" id="GO:0008832">
    <property type="term" value="F:dGTPase activity"/>
    <property type="evidence" value="ECO:0007669"/>
    <property type="project" value="TreeGrafter"/>
</dbReference>
<dbReference type="GO" id="GO:0006203">
    <property type="term" value="P:dGTP catabolic process"/>
    <property type="evidence" value="ECO:0007669"/>
    <property type="project" value="TreeGrafter"/>
</dbReference>
<dbReference type="CDD" id="cd00077">
    <property type="entry name" value="HDc"/>
    <property type="match status" value="1"/>
</dbReference>
<dbReference type="FunFam" id="1.10.3210.10:FF:000024">
    <property type="entry name" value="Deoxyguanosinetriphosphate triphosphohydrolase-like protein"/>
    <property type="match status" value="1"/>
</dbReference>
<dbReference type="Gene3D" id="1.10.3210.10">
    <property type="entry name" value="Hypothetical protein af1432"/>
    <property type="match status" value="1"/>
</dbReference>
<dbReference type="HAMAP" id="MF_01212">
    <property type="entry name" value="dGTPase_type2"/>
    <property type="match status" value="1"/>
</dbReference>
<dbReference type="InterPro" id="IPR006261">
    <property type="entry name" value="dGTPase"/>
</dbReference>
<dbReference type="InterPro" id="IPR050135">
    <property type="entry name" value="dGTPase-like"/>
</dbReference>
<dbReference type="InterPro" id="IPR023023">
    <property type="entry name" value="dNTPase_2"/>
</dbReference>
<dbReference type="InterPro" id="IPR003607">
    <property type="entry name" value="HD/PDEase_dom"/>
</dbReference>
<dbReference type="InterPro" id="IPR006674">
    <property type="entry name" value="HD_domain"/>
</dbReference>
<dbReference type="InterPro" id="IPR026875">
    <property type="entry name" value="PHydrolase_assoc_dom"/>
</dbReference>
<dbReference type="NCBIfam" id="TIGR01353">
    <property type="entry name" value="dGTP_triPase"/>
    <property type="match status" value="1"/>
</dbReference>
<dbReference type="NCBIfam" id="NF002326">
    <property type="entry name" value="PRK01286.1-1"/>
    <property type="match status" value="1"/>
</dbReference>
<dbReference type="PANTHER" id="PTHR11373:SF43">
    <property type="entry name" value="DEOXYGUANOSINETRIPHOSPHATE TRIPHOSPHOHYDROLASE-LIKE PROTEIN"/>
    <property type="match status" value="1"/>
</dbReference>
<dbReference type="PANTHER" id="PTHR11373">
    <property type="entry name" value="DEOXYNUCLEOSIDE TRIPHOSPHATE TRIPHOSPHOHYDROLASE"/>
    <property type="match status" value="1"/>
</dbReference>
<dbReference type="Pfam" id="PF01966">
    <property type="entry name" value="HD"/>
    <property type="match status" value="1"/>
</dbReference>
<dbReference type="Pfam" id="PF13286">
    <property type="entry name" value="HD_assoc"/>
    <property type="match status" value="1"/>
</dbReference>
<dbReference type="SMART" id="SM00471">
    <property type="entry name" value="HDc"/>
    <property type="match status" value="1"/>
</dbReference>
<dbReference type="SUPFAM" id="SSF109604">
    <property type="entry name" value="HD-domain/PDEase-like"/>
    <property type="match status" value="1"/>
</dbReference>
<dbReference type="PROSITE" id="PS51831">
    <property type="entry name" value="HD"/>
    <property type="match status" value="1"/>
</dbReference>